<dbReference type="EC" id="4.1.1.49" evidence="1"/>
<dbReference type="EMBL" id="CP000653">
    <property type="protein sequence ID" value="ABP62471.1"/>
    <property type="molecule type" value="Genomic_DNA"/>
</dbReference>
<dbReference type="RefSeq" id="WP_015960777.1">
    <property type="nucleotide sequence ID" value="NC_009436.1"/>
</dbReference>
<dbReference type="SMR" id="A4WFJ1"/>
<dbReference type="STRING" id="399742.Ent638_3816"/>
<dbReference type="KEGG" id="ent:Ent638_3816"/>
<dbReference type="eggNOG" id="COG1866">
    <property type="taxonomic scope" value="Bacteria"/>
</dbReference>
<dbReference type="HOGENOM" id="CLU_018247_0_1_6"/>
<dbReference type="OrthoDB" id="9806325at2"/>
<dbReference type="UniPathway" id="UPA00138"/>
<dbReference type="Proteomes" id="UP000000230">
    <property type="component" value="Chromosome"/>
</dbReference>
<dbReference type="GO" id="GO:0005829">
    <property type="term" value="C:cytosol"/>
    <property type="evidence" value="ECO:0007669"/>
    <property type="project" value="TreeGrafter"/>
</dbReference>
<dbReference type="GO" id="GO:0005524">
    <property type="term" value="F:ATP binding"/>
    <property type="evidence" value="ECO:0007669"/>
    <property type="project" value="UniProtKB-UniRule"/>
</dbReference>
<dbReference type="GO" id="GO:0046872">
    <property type="term" value="F:metal ion binding"/>
    <property type="evidence" value="ECO:0007669"/>
    <property type="project" value="UniProtKB-KW"/>
</dbReference>
<dbReference type="GO" id="GO:0004612">
    <property type="term" value="F:phosphoenolpyruvate carboxykinase (ATP) activity"/>
    <property type="evidence" value="ECO:0007669"/>
    <property type="project" value="UniProtKB-UniRule"/>
</dbReference>
<dbReference type="GO" id="GO:0006094">
    <property type="term" value="P:gluconeogenesis"/>
    <property type="evidence" value="ECO:0007669"/>
    <property type="project" value="UniProtKB-UniRule"/>
</dbReference>
<dbReference type="CDD" id="cd00484">
    <property type="entry name" value="PEPCK_ATP"/>
    <property type="match status" value="1"/>
</dbReference>
<dbReference type="FunFam" id="2.170.8.10:FF:000001">
    <property type="entry name" value="Phosphoenolpyruvate carboxykinase (ATP)"/>
    <property type="match status" value="1"/>
</dbReference>
<dbReference type="FunFam" id="3.40.449.10:FF:000001">
    <property type="entry name" value="Phosphoenolpyruvate carboxykinase (ATP)"/>
    <property type="match status" value="1"/>
</dbReference>
<dbReference type="Gene3D" id="3.90.228.20">
    <property type="match status" value="1"/>
</dbReference>
<dbReference type="Gene3D" id="3.40.449.10">
    <property type="entry name" value="Phosphoenolpyruvate Carboxykinase, domain 1"/>
    <property type="match status" value="1"/>
</dbReference>
<dbReference type="Gene3D" id="2.170.8.10">
    <property type="entry name" value="Phosphoenolpyruvate Carboxykinase, domain 2"/>
    <property type="match status" value="1"/>
</dbReference>
<dbReference type="HAMAP" id="MF_00453">
    <property type="entry name" value="PEPCK_ATP"/>
    <property type="match status" value="1"/>
</dbReference>
<dbReference type="InterPro" id="IPR001272">
    <property type="entry name" value="PEP_carboxykinase_ATP"/>
</dbReference>
<dbReference type="InterPro" id="IPR013035">
    <property type="entry name" value="PEP_carboxykinase_C"/>
</dbReference>
<dbReference type="InterPro" id="IPR008210">
    <property type="entry name" value="PEP_carboxykinase_N"/>
</dbReference>
<dbReference type="InterPro" id="IPR015994">
    <property type="entry name" value="PEPCK_ATP_CS"/>
</dbReference>
<dbReference type="NCBIfam" id="TIGR00224">
    <property type="entry name" value="pckA"/>
    <property type="match status" value="1"/>
</dbReference>
<dbReference type="NCBIfam" id="NF006819">
    <property type="entry name" value="PRK09344.1-1"/>
    <property type="match status" value="1"/>
</dbReference>
<dbReference type="NCBIfam" id="NF006820">
    <property type="entry name" value="PRK09344.1-2"/>
    <property type="match status" value="1"/>
</dbReference>
<dbReference type="NCBIfam" id="NF006821">
    <property type="entry name" value="PRK09344.1-3"/>
    <property type="match status" value="1"/>
</dbReference>
<dbReference type="PANTHER" id="PTHR30031:SF0">
    <property type="entry name" value="PHOSPHOENOLPYRUVATE CARBOXYKINASE (ATP)"/>
    <property type="match status" value="1"/>
</dbReference>
<dbReference type="PANTHER" id="PTHR30031">
    <property type="entry name" value="PHOSPHOENOLPYRUVATE CARBOXYKINASE ATP"/>
    <property type="match status" value="1"/>
</dbReference>
<dbReference type="Pfam" id="PF01293">
    <property type="entry name" value="PEPCK_ATP"/>
    <property type="match status" value="1"/>
</dbReference>
<dbReference type="PIRSF" id="PIRSF006294">
    <property type="entry name" value="PEP_crbxkin"/>
    <property type="match status" value="1"/>
</dbReference>
<dbReference type="SUPFAM" id="SSF68923">
    <property type="entry name" value="PEP carboxykinase N-terminal domain"/>
    <property type="match status" value="1"/>
</dbReference>
<dbReference type="SUPFAM" id="SSF53795">
    <property type="entry name" value="PEP carboxykinase-like"/>
    <property type="match status" value="1"/>
</dbReference>
<dbReference type="PROSITE" id="PS00532">
    <property type="entry name" value="PEPCK_ATP"/>
    <property type="match status" value="1"/>
</dbReference>
<keyword id="KW-0067">ATP-binding</keyword>
<keyword id="KW-0963">Cytoplasm</keyword>
<keyword id="KW-0210">Decarboxylase</keyword>
<keyword id="KW-0312">Gluconeogenesis</keyword>
<keyword id="KW-0456">Lyase</keyword>
<keyword id="KW-0464">Manganese</keyword>
<keyword id="KW-0479">Metal-binding</keyword>
<keyword id="KW-0547">Nucleotide-binding</keyword>
<proteinExistence type="inferred from homology"/>
<accession>A4WFJ1</accession>
<gene>
    <name evidence="1" type="primary">pckA</name>
    <name type="ordered locus">Ent638_3816</name>
</gene>
<comment type="function">
    <text evidence="1">Involved in the gluconeogenesis. Catalyzes the conversion of oxaloacetate (OAA) to phosphoenolpyruvate (PEP) through direct phosphoryl transfer between the nucleoside triphosphate and OAA.</text>
</comment>
<comment type="catalytic activity">
    <reaction evidence="1">
        <text>oxaloacetate + ATP = phosphoenolpyruvate + ADP + CO2</text>
        <dbReference type="Rhea" id="RHEA:18617"/>
        <dbReference type="ChEBI" id="CHEBI:16452"/>
        <dbReference type="ChEBI" id="CHEBI:16526"/>
        <dbReference type="ChEBI" id="CHEBI:30616"/>
        <dbReference type="ChEBI" id="CHEBI:58702"/>
        <dbReference type="ChEBI" id="CHEBI:456216"/>
        <dbReference type="EC" id="4.1.1.49"/>
    </reaction>
</comment>
<comment type="cofactor">
    <cofactor evidence="1">
        <name>Mn(2+)</name>
        <dbReference type="ChEBI" id="CHEBI:29035"/>
    </cofactor>
    <text evidence="1">Binds 1 Mn(2+) ion per subunit.</text>
</comment>
<comment type="pathway">
    <text evidence="1">Carbohydrate biosynthesis; gluconeogenesis.</text>
</comment>
<comment type="subunit">
    <text evidence="1">Monomer.</text>
</comment>
<comment type="subcellular location">
    <subcellularLocation>
        <location evidence="1">Cytoplasm</location>
    </subcellularLocation>
</comment>
<comment type="similarity">
    <text evidence="1">Belongs to the phosphoenolpyruvate carboxykinase (ATP) family.</text>
</comment>
<protein>
    <recommendedName>
        <fullName evidence="1">Phosphoenolpyruvate carboxykinase (ATP)</fullName>
        <shortName evidence="1">PCK</shortName>
        <shortName evidence="1">PEP carboxykinase</shortName>
        <shortName evidence="1">PEPCK</shortName>
        <ecNumber evidence="1">4.1.1.49</ecNumber>
    </recommendedName>
</protein>
<feature type="chain" id="PRO_1000060303" description="Phosphoenolpyruvate carboxykinase (ATP)">
    <location>
        <begin position="1"/>
        <end position="538"/>
    </location>
</feature>
<feature type="binding site" evidence="1">
    <location>
        <position position="64"/>
    </location>
    <ligand>
        <name>substrate</name>
    </ligand>
</feature>
<feature type="binding site" evidence="1">
    <location>
        <position position="206"/>
    </location>
    <ligand>
        <name>substrate</name>
    </ligand>
</feature>
<feature type="binding site" evidence="1">
    <location>
        <position position="212"/>
    </location>
    <ligand>
        <name>ATP</name>
        <dbReference type="ChEBI" id="CHEBI:30616"/>
    </ligand>
</feature>
<feature type="binding site" evidence="1">
    <location>
        <position position="212"/>
    </location>
    <ligand>
        <name>Mn(2+)</name>
        <dbReference type="ChEBI" id="CHEBI:29035"/>
    </ligand>
</feature>
<feature type="binding site" evidence="1">
    <location>
        <position position="212"/>
    </location>
    <ligand>
        <name>substrate</name>
    </ligand>
</feature>
<feature type="binding site" evidence="1">
    <location>
        <position position="231"/>
    </location>
    <ligand>
        <name>ATP</name>
        <dbReference type="ChEBI" id="CHEBI:30616"/>
    </ligand>
</feature>
<feature type="binding site" evidence="1">
    <location>
        <position position="231"/>
    </location>
    <ligand>
        <name>Mn(2+)</name>
        <dbReference type="ChEBI" id="CHEBI:29035"/>
    </ligand>
</feature>
<feature type="binding site" evidence="1">
    <location>
        <begin position="247"/>
        <end position="255"/>
    </location>
    <ligand>
        <name>ATP</name>
        <dbReference type="ChEBI" id="CHEBI:30616"/>
    </ligand>
</feature>
<feature type="binding site" evidence="1">
    <location>
        <position position="268"/>
    </location>
    <ligand>
        <name>Mn(2+)</name>
        <dbReference type="ChEBI" id="CHEBI:29035"/>
    </ligand>
</feature>
<feature type="binding site" evidence="1">
    <location>
        <position position="296"/>
    </location>
    <ligand>
        <name>ATP</name>
        <dbReference type="ChEBI" id="CHEBI:30616"/>
    </ligand>
</feature>
<feature type="binding site" evidence="1">
    <location>
        <position position="332"/>
    </location>
    <ligand>
        <name>ATP</name>
        <dbReference type="ChEBI" id="CHEBI:30616"/>
    </ligand>
</feature>
<feature type="binding site" evidence="1">
    <location>
        <position position="332"/>
    </location>
    <ligand>
        <name>substrate</name>
    </ligand>
</feature>
<feature type="binding site" evidence="1">
    <location>
        <begin position="448"/>
        <end position="449"/>
    </location>
    <ligand>
        <name>ATP</name>
        <dbReference type="ChEBI" id="CHEBI:30616"/>
    </ligand>
</feature>
<feature type="binding site" evidence="1">
    <location>
        <position position="454"/>
    </location>
    <ligand>
        <name>ATP</name>
        <dbReference type="ChEBI" id="CHEBI:30616"/>
    </ligand>
</feature>
<organism>
    <name type="scientific">Enterobacter sp. (strain 638)</name>
    <dbReference type="NCBI Taxonomy" id="399742"/>
    <lineage>
        <taxon>Bacteria</taxon>
        <taxon>Pseudomonadati</taxon>
        <taxon>Pseudomonadota</taxon>
        <taxon>Gammaproteobacteria</taxon>
        <taxon>Enterobacterales</taxon>
        <taxon>Enterobacteriaceae</taxon>
        <taxon>Enterobacter</taxon>
    </lineage>
</organism>
<name>PCKA_ENT38</name>
<reference key="1">
    <citation type="journal article" date="2010" name="PLoS Genet.">
        <title>Genome sequence of the plant growth promoting endophytic bacterium Enterobacter sp. 638.</title>
        <authorList>
            <person name="Taghavi S."/>
            <person name="van der Lelie D."/>
            <person name="Hoffman A."/>
            <person name="Zhang Y.B."/>
            <person name="Walla M.D."/>
            <person name="Vangronsveld J."/>
            <person name="Newman L."/>
            <person name="Monchy S."/>
        </authorList>
    </citation>
    <scope>NUCLEOTIDE SEQUENCE [LARGE SCALE GENOMIC DNA]</scope>
    <source>
        <strain>638</strain>
    </source>
</reference>
<sequence>MRVNDLTPQDLKAYGINDVQELVYNPDYDTLYQEELNPALEGYERGVLTNTGAIAVDTGIFTGRSPKDKYIVRDDTTRDTLWWADKGKGKNDNKPLSQETWQHLKGLVTQQLSGKRLFIIDAFCGANADTRLSVRFITEVAWQAHFVKNMFIRPTDEELQDFEPDFIVMNGAKCTNPQWKEQGLNSENFIAFNLTERIQLIGGTWYGGEMKKGMFSVMNYLLPLQGIASMHCSANVGEEGDVAVFFGLSGTGKTTLSTDPKRRLIGDDEHGWDDDGVFNFEGGCYAKTIRLSAEAEPDIFHAIRRDALLENVTVRADGTVDFDDASKTENTRVSYPIYHIDNIVKPVSKAGHASKVIFLTADAFGVLPPVSRLTASQTQYHFLSGFTAKLAGTERGVTEPTPTFSACFGAAFLSLHPTQYAEVLVKRMQAAGAQAYLVNTGWNGTGKRISIKDTRAIIDAIIDGSLDDAETFTLPMFDLAIPTKLPGVDTHILDPRNTYGSPEQWQEKAEALAKLFIENFEKYTDTPAGAALVSAGPR</sequence>
<evidence type="ECO:0000255" key="1">
    <source>
        <dbReference type="HAMAP-Rule" id="MF_00453"/>
    </source>
</evidence>